<gene>
    <name type="primary">mogat1</name>
    <name type="ORF">TGas062a14.1</name>
</gene>
<feature type="chain" id="PRO_0000249061" description="2-acylglycerol O-acyltransferase 1">
    <location>
        <begin position="1"/>
        <end position="335"/>
    </location>
</feature>
<feature type="transmembrane region" description="Helical" evidence="2">
    <location>
        <begin position="24"/>
        <end position="44"/>
    </location>
</feature>
<feature type="transmembrane region" description="Helical" evidence="2">
    <location>
        <begin position="47"/>
        <end position="67"/>
    </location>
</feature>
<feature type="glycosylation site" description="N-linked (GlcNAc...) asparagine" evidence="2">
    <location>
        <position position="77"/>
    </location>
</feature>
<feature type="glycosylation site" description="N-linked (GlcNAc...) asparagine" evidence="2">
    <location>
        <position position="125"/>
    </location>
</feature>
<feature type="glycosylation site" description="N-linked (GlcNAc...) asparagine" evidence="2">
    <location>
        <position position="180"/>
    </location>
</feature>
<name>MOGT1_XENTR</name>
<dbReference type="EC" id="2.3.1.22" evidence="1"/>
<dbReference type="EMBL" id="CR942398">
    <property type="protein sequence ID" value="CAJ83751.1"/>
    <property type="molecule type" value="mRNA"/>
</dbReference>
<dbReference type="RefSeq" id="NP_001039202.1">
    <property type="nucleotide sequence ID" value="NM_001045737.1"/>
</dbReference>
<dbReference type="FunCoup" id="Q28C88">
    <property type="interactions" value="197"/>
</dbReference>
<dbReference type="STRING" id="8364.ENSXETP00000015805"/>
<dbReference type="GlyCosmos" id="Q28C88">
    <property type="glycosylation" value="3 sites, No reported glycans"/>
</dbReference>
<dbReference type="PaxDb" id="8364-ENSXETP00000006423"/>
<dbReference type="GeneID" id="734060"/>
<dbReference type="KEGG" id="xtr:734060"/>
<dbReference type="AGR" id="Xenbase:XB-GENE-1004226"/>
<dbReference type="CTD" id="116255"/>
<dbReference type="Xenbase" id="XB-GENE-1004226">
    <property type="gene designation" value="mogat1"/>
</dbReference>
<dbReference type="eggNOG" id="KOG0831">
    <property type="taxonomic scope" value="Eukaryota"/>
</dbReference>
<dbReference type="InParanoid" id="Q28C88"/>
<dbReference type="OrthoDB" id="264532at2759"/>
<dbReference type="Reactome" id="R-XTR-75109">
    <property type="pathway name" value="Triglyceride biosynthesis"/>
</dbReference>
<dbReference type="UniPathway" id="UPA00282"/>
<dbReference type="Proteomes" id="UP000008143">
    <property type="component" value="Chromosome 5"/>
</dbReference>
<dbReference type="GO" id="GO:0005789">
    <property type="term" value="C:endoplasmic reticulum membrane"/>
    <property type="evidence" value="ECO:0007669"/>
    <property type="project" value="UniProtKB-SubCell"/>
</dbReference>
<dbReference type="GO" id="GO:0003846">
    <property type="term" value="F:2-acylglycerol O-acyltransferase activity"/>
    <property type="evidence" value="ECO:0007669"/>
    <property type="project" value="UniProtKB-EC"/>
</dbReference>
<dbReference type="GO" id="GO:0006071">
    <property type="term" value="P:glycerol metabolic process"/>
    <property type="evidence" value="ECO:0007669"/>
    <property type="project" value="UniProtKB-KW"/>
</dbReference>
<dbReference type="GO" id="GO:0019432">
    <property type="term" value="P:triglyceride biosynthetic process"/>
    <property type="evidence" value="ECO:0007669"/>
    <property type="project" value="UniProtKB-UniPathway"/>
</dbReference>
<dbReference type="CDD" id="cd07987">
    <property type="entry name" value="LPLAT_MGAT-like"/>
    <property type="match status" value="1"/>
</dbReference>
<dbReference type="InterPro" id="IPR007130">
    <property type="entry name" value="DAGAT"/>
</dbReference>
<dbReference type="PANTHER" id="PTHR12317:SF26">
    <property type="entry name" value="2-ACYLGLYCEROL O-ACYLTRANSFERASE 1"/>
    <property type="match status" value="1"/>
</dbReference>
<dbReference type="PANTHER" id="PTHR12317">
    <property type="entry name" value="DIACYLGLYCEROL O-ACYLTRANSFERASE"/>
    <property type="match status" value="1"/>
</dbReference>
<dbReference type="Pfam" id="PF03982">
    <property type="entry name" value="DAGAT"/>
    <property type="match status" value="1"/>
</dbReference>
<sequence length="335" mass="38751">MKLEFAPINIPLARRLQTTAVFQWVFSFLLLAQCCIGIFLSLVLARLWLILALYVLWLYLDWETPQAGGRRWEWVRNWTVWKYFKDYFPIRLVKTCDLDPQHNYIMGFHPHGVLVAGAFGNFCTNYTGFKELFPGLTPYLHILPFWFRCPFFREYAMCVGLVSATKKSVNHVLSKENGGNISIIVIGGAEESLDAHPGSLILHILKRKGFIKVAFKQGAHLVPVFSFGENELFQQVPNPKGSFLRCVQERLQKIMGFAMPLFHARGIFQYSFGLMPYRMPIHTVVGRPIPVKQTSHPTQEEIESLHQQYLSALRDLFEEHKERYGIPEHESLIFT</sequence>
<organism>
    <name type="scientific">Xenopus tropicalis</name>
    <name type="common">Western clawed frog</name>
    <name type="synonym">Silurana tropicalis</name>
    <dbReference type="NCBI Taxonomy" id="8364"/>
    <lineage>
        <taxon>Eukaryota</taxon>
        <taxon>Metazoa</taxon>
        <taxon>Chordata</taxon>
        <taxon>Craniata</taxon>
        <taxon>Vertebrata</taxon>
        <taxon>Euteleostomi</taxon>
        <taxon>Amphibia</taxon>
        <taxon>Batrachia</taxon>
        <taxon>Anura</taxon>
        <taxon>Pipoidea</taxon>
        <taxon>Pipidae</taxon>
        <taxon>Xenopodinae</taxon>
        <taxon>Xenopus</taxon>
        <taxon>Silurana</taxon>
    </lineage>
</organism>
<proteinExistence type="evidence at transcript level"/>
<protein>
    <recommendedName>
        <fullName>2-acylglycerol O-acyltransferase 1</fullName>
        <ecNumber evidence="1">2.3.1.22</ecNumber>
    </recommendedName>
    <alternativeName>
        <fullName>Acyl-CoA:monoacylglycerol acyltransferase 1</fullName>
        <shortName>MGAT1</shortName>
    </alternativeName>
    <alternativeName>
        <fullName>Monoacylglycerol O-acyltransferase 1</fullName>
    </alternativeName>
</protein>
<keyword id="KW-0012">Acyltransferase</keyword>
<keyword id="KW-0256">Endoplasmic reticulum</keyword>
<keyword id="KW-0319">Glycerol metabolism</keyword>
<keyword id="KW-0325">Glycoprotein</keyword>
<keyword id="KW-0444">Lipid biosynthesis</keyword>
<keyword id="KW-0443">Lipid metabolism</keyword>
<keyword id="KW-0472">Membrane</keyword>
<keyword id="KW-1185">Reference proteome</keyword>
<keyword id="KW-0808">Transferase</keyword>
<keyword id="KW-0812">Transmembrane</keyword>
<keyword id="KW-1133">Transmembrane helix</keyword>
<comment type="function">
    <text evidence="1">Involved in glycerolipid synthesis and lipid metabolism. Catalyzes the formation of diacylglycerol, the precursor of triacylglycerol, by transferring the acyl chain of a fatty acyl-CoA to a monoacylglycerol, mainly at the sn-1 or sn-3 positions. It uses both sn-2-monoacylglycerol (2-acylglycerol) and sn-1-monoacylglycerol (1-acyl-sn-glycerol) equally well as substrates, and uses sn-3-monoacylglycerol (3-acyl-sn-glycerol) with lower efficiency.</text>
</comment>
<comment type="catalytic activity">
    <reaction evidence="1">
        <text>a 2-acylglycerol + an acyl-CoA = a 1,2-diacylglycerol + CoA</text>
        <dbReference type="Rhea" id="RHEA:16741"/>
        <dbReference type="ChEBI" id="CHEBI:17389"/>
        <dbReference type="ChEBI" id="CHEBI:49172"/>
        <dbReference type="ChEBI" id="CHEBI:57287"/>
        <dbReference type="ChEBI" id="CHEBI:58342"/>
        <dbReference type="EC" id="2.3.1.22"/>
    </reaction>
    <physiologicalReaction direction="left-to-right" evidence="1">
        <dbReference type="Rhea" id="RHEA:16742"/>
    </physiologicalReaction>
</comment>
<comment type="catalytic activity">
    <reaction evidence="1">
        <text>a 2-acylglycerol + an acyl-CoA = a 1,2-diacyl-sn-glycerol + CoA</text>
        <dbReference type="Rhea" id="RHEA:32947"/>
        <dbReference type="ChEBI" id="CHEBI:17389"/>
        <dbReference type="ChEBI" id="CHEBI:17815"/>
        <dbReference type="ChEBI" id="CHEBI:57287"/>
        <dbReference type="ChEBI" id="CHEBI:58342"/>
    </reaction>
    <physiologicalReaction direction="left-to-right" evidence="1">
        <dbReference type="Rhea" id="RHEA:32948"/>
    </physiologicalReaction>
</comment>
<comment type="catalytic activity">
    <reaction evidence="1">
        <text>a 2-acylglycerol + an acyl-CoA = a 2,3-diacyl-sn-glycerol + CoA</text>
        <dbReference type="Rhea" id="RHEA:38467"/>
        <dbReference type="ChEBI" id="CHEBI:17389"/>
        <dbReference type="ChEBI" id="CHEBI:57287"/>
        <dbReference type="ChEBI" id="CHEBI:58342"/>
        <dbReference type="ChEBI" id="CHEBI:75524"/>
    </reaction>
    <physiologicalReaction direction="left-to-right" evidence="1">
        <dbReference type="Rhea" id="RHEA:38468"/>
    </physiologicalReaction>
</comment>
<comment type="catalytic activity">
    <reaction evidence="1">
        <text>a 1-acylglycerol + an acyl-CoA = a 1,2-diacylglycerol + CoA</text>
        <dbReference type="Rhea" id="RHEA:39943"/>
        <dbReference type="ChEBI" id="CHEBI:35759"/>
        <dbReference type="ChEBI" id="CHEBI:49172"/>
        <dbReference type="ChEBI" id="CHEBI:57287"/>
        <dbReference type="ChEBI" id="CHEBI:58342"/>
    </reaction>
    <physiologicalReaction direction="left-to-right" evidence="1">
        <dbReference type="Rhea" id="RHEA:39944"/>
    </physiologicalReaction>
</comment>
<comment type="catalytic activity">
    <reaction evidence="1">
        <text>a 1-acylglycerol + an acyl-CoA = a 1,3-diacylglycerol + CoA</text>
        <dbReference type="Rhea" id="RHEA:77571"/>
        <dbReference type="ChEBI" id="CHEBI:35759"/>
        <dbReference type="ChEBI" id="CHEBI:47777"/>
        <dbReference type="ChEBI" id="CHEBI:57287"/>
        <dbReference type="ChEBI" id="CHEBI:58342"/>
    </reaction>
    <physiologicalReaction direction="left-to-right" evidence="1">
        <dbReference type="Rhea" id="RHEA:77572"/>
    </physiologicalReaction>
</comment>
<comment type="catalytic activity">
    <reaction evidence="1">
        <text>a 1-acyl-sn-glycerol + an acyl-CoA = a 1,3-diacyl-sn-glycerol + CoA</text>
        <dbReference type="Rhea" id="RHEA:77559"/>
        <dbReference type="ChEBI" id="CHEBI:57287"/>
        <dbReference type="ChEBI" id="CHEBI:58342"/>
        <dbReference type="ChEBI" id="CHEBI:64683"/>
        <dbReference type="ChEBI" id="CHEBI:77272"/>
    </reaction>
    <physiologicalReaction direction="left-to-right" evidence="1">
        <dbReference type="Rhea" id="RHEA:77560"/>
    </physiologicalReaction>
</comment>
<comment type="catalytic activity">
    <reaction evidence="1">
        <text>a 3-acyl-sn-glycerol + an acyl-CoA = a 1,3-diacyl-sn-glycerol + CoA</text>
        <dbReference type="Rhea" id="RHEA:77555"/>
        <dbReference type="ChEBI" id="CHEBI:57287"/>
        <dbReference type="ChEBI" id="CHEBI:58342"/>
        <dbReference type="ChEBI" id="CHEBI:64760"/>
        <dbReference type="ChEBI" id="CHEBI:77272"/>
    </reaction>
    <physiologicalReaction direction="left-to-right" evidence="1">
        <dbReference type="Rhea" id="RHEA:77556"/>
    </physiologicalReaction>
</comment>
<comment type="pathway">
    <text evidence="1">Glycerolipid metabolism; triacylglycerol biosynthesis.</text>
</comment>
<comment type="subcellular location">
    <subcellularLocation>
        <location evidence="1">Endoplasmic reticulum membrane</location>
        <topology evidence="1">Multi-pass membrane protein</topology>
    </subcellularLocation>
</comment>
<comment type="similarity">
    <text evidence="3">Belongs to the diacylglycerol acyltransferase family.</text>
</comment>
<accession>Q28C88</accession>
<reference key="1">
    <citation type="submission" date="2006-03" db="EMBL/GenBank/DDBJ databases">
        <authorList>
            <consortium name="Sanger Xenopus tropicalis EST/cDNA project"/>
        </authorList>
    </citation>
    <scope>NUCLEOTIDE SEQUENCE [LARGE SCALE MRNA]</scope>
    <source>
        <tissue>Gastrula</tissue>
    </source>
</reference>
<evidence type="ECO:0000250" key="1">
    <source>
        <dbReference type="UniProtKB" id="Q91ZV4"/>
    </source>
</evidence>
<evidence type="ECO:0000255" key="2"/>
<evidence type="ECO:0000305" key="3"/>